<dbReference type="EMBL" id="CM003143">
    <property type="protein sequence ID" value="KIS70237.1"/>
    <property type="molecule type" value="Genomic_DNA"/>
</dbReference>
<dbReference type="RefSeq" id="XP_011388313.1">
    <property type="nucleotide sequence ID" value="XM_011390011.1"/>
</dbReference>
<dbReference type="SMR" id="Q4P0P0"/>
<dbReference type="FunCoup" id="Q4P0P0">
    <property type="interactions" value="631"/>
</dbReference>
<dbReference type="STRING" id="237631.Q4P0P0"/>
<dbReference type="EnsemblFungi" id="KIS70237">
    <property type="protein sequence ID" value="KIS70237"/>
    <property type="gene ID" value="UMAG_06323"/>
</dbReference>
<dbReference type="GeneID" id="23565946"/>
<dbReference type="KEGG" id="uma:UMAG_06323"/>
<dbReference type="VEuPathDB" id="FungiDB:UMAG_06323"/>
<dbReference type="eggNOG" id="KOG1076">
    <property type="taxonomic scope" value="Eukaryota"/>
</dbReference>
<dbReference type="HOGENOM" id="CLU_004304_0_2_1"/>
<dbReference type="InParanoid" id="Q4P0P0"/>
<dbReference type="OMA" id="FRCGLIK"/>
<dbReference type="OrthoDB" id="29647at2759"/>
<dbReference type="Proteomes" id="UP000000561">
    <property type="component" value="Chromosome 4"/>
</dbReference>
<dbReference type="GO" id="GO:0016282">
    <property type="term" value="C:eukaryotic 43S preinitiation complex"/>
    <property type="evidence" value="ECO:0007669"/>
    <property type="project" value="UniProtKB-UniRule"/>
</dbReference>
<dbReference type="GO" id="GO:0033290">
    <property type="term" value="C:eukaryotic 48S preinitiation complex"/>
    <property type="evidence" value="ECO:0007669"/>
    <property type="project" value="UniProtKB-UniRule"/>
</dbReference>
<dbReference type="GO" id="GO:0005852">
    <property type="term" value="C:eukaryotic translation initiation factor 3 complex"/>
    <property type="evidence" value="ECO:0000318"/>
    <property type="project" value="GO_Central"/>
</dbReference>
<dbReference type="GO" id="GO:0071540">
    <property type="term" value="C:eukaryotic translation initiation factor 3 complex, eIF3e"/>
    <property type="evidence" value="ECO:0007669"/>
    <property type="project" value="EnsemblFungi"/>
</dbReference>
<dbReference type="GO" id="GO:0071541">
    <property type="term" value="C:eukaryotic translation initiation factor 3 complex, eIF3m"/>
    <property type="evidence" value="ECO:0007669"/>
    <property type="project" value="EnsemblFungi"/>
</dbReference>
<dbReference type="GO" id="GO:0003723">
    <property type="term" value="F:RNA binding"/>
    <property type="evidence" value="ECO:0007669"/>
    <property type="project" value="InterPro"/>
</dbReference>
<dbReference type="GO" id="GO:0003743">
    <property type="term" value="F:translation initiation factor activity"/>
    <property type="evidence" value="ECO:0007669"/>
    <property type="project" value="UniProtKB-UniRule"/>
</dbReference>
<dbReference type="GO" id="GO:0031369">
    <property type="term" value="F:translation initiation factor binding"/>
    <property type="evidence" value="ECO:0000318"/>
    <property type="project" value="GO_Central"/>
</dbReference>
<dbReference type="GO" id="GO:0001732">
    <property type="term" value="P:formation of cytoplasmic translation initiation complex"/>
    <property type="evidence" value="ECO:0007669"/>
    <property type="project" value="UniProtKB-UniRule"/>
</dbReference>
<dbReference type="GO" id="GO:0006413">
    <property type="term" value="P:translational initiation"/>
    <property type="evidence" value="ECO:0000318"/>
    <property type="project" value="GO_Central"/>
</dbReference>
<dbReference type="FunFam" id="1.10.10.10:FF:000300">
    <property type="entry name" value="Eukaryotic translation initiation factor 3 subunit C"/>
    <property type="match status" value="1"/>
</dbReference>
<dbReference type="Gene3D" id="1.10.10.10">
    <property type="entry name" value="Winged helix-like DNA-binding domain superfamily/Winged helix DNA-binding domain"/>
    <property type="match status" value="1"/>
</dbReference>
<dbReference type="HAMAP" id="MF_03002">
    <property type="entry name" value="eIF3c"/>
    <property type="match status" value="1"/>
</dbReference>
<dbReference type="InterPro" id="IPR027516">
    <property type="entry name" value="EIF3C"/>
</dbReference>
<dbReference type="InterPro" id="IPR008905">
    <property type="entry name" value="EIF3C_N_dom"/>
</dbReference>
<dbReference type="InterPro" id="IPR000717">
    <property type="entry name" value="PCI_dom"/>
</dbReference>
<dbReference type="InterPro" id="IPR036388">
    <property type="entry name" value="WH-like_DNA-bd_sf"/>
</dbReference>
<dbReference type="InterPro" id="IPR036390">
    <property type="entry name" value="WH_DNA-bd_sf"/>
</dbReference>
<dbReference type="PANTHER" id="PTHR13937">
    <property type="entry name" value="EUKARYOTIC TRANSLATION INITATION FACTOR 3, SUBUNIT 8 EIF3S8 -RELATED"/>
    <property type="match status" value="1"/>
</dbReference>
<dbReference type="PANTHER" id="PTHR13937:SF0">
    <property type="entry name" value="EUKARYOTIC TRANSLATION INITIATION FACTOR 3 SUBUNIT C-RELATED"/>
    <property type="match status" value="1"/>
</dbReference>
<dbReference type="Pfam" id="PF05470">
    <property type="entry name" value="eIF-3c_N"/>
    <property type="match status" value="1"/>
</dbReference>
<dbReference type="Pfam" id="PF01399">
    <property type="entry name" value="PCI"/>
    <property type="match status" value="1"/>
</dbReference>
<dbReference type="SMART" id="SM00088">
    <property type="entry name" value="PINT"/>
    <property type="match status" value="1"/>
</dbReference>
<dbReference type="SUPFAM" id="SSF46785">
    <property type="entry name" value="Winged helix' DNA-binding domain"/>
    <property type="match status" value="1"/>
</dbReference>
<dbReference type="PROSITE" id="PS50250">
    <property type="entry name" value="PCI"/>
    <property type="match status" value="1"/>
</dbReference>
<evidence type="ECO:0000255" key="1">
    <source>
        <dbReference type="HAMAP-Rule" id="MF_03002"/>
    </source>
</evidence>
<evidence type="ECO:0000255" key="2">
    <source>
        <dbReference type="PROSITE-ProRule" id="PRU01185"/>
    </source>
</evidence>
<evidence type="ECO:0000256" key="3">
    <source>
        <dbReference type="SAM" id="MobiDB-lite"/>
    </source>
</evidence>
<gene>
    <name evidence="1" type="primary">NIP1</name>
    <name type="ORF">UMAG_06323</name>
</gene>
<sequence length="895" mass="100084">MSGFFRKVGDSDSESDISSSEEELSELESGDEQPKTTQPAASRSRFLKGSDDDSDSDDDDSDDDDQDSLDSDDDNGERRTDGKKAPTSRFMKGAADSDDSDSEEEVKKVVKSAKDKRIDDMQTIVNHIESAQKSSDWTSINKDFDNLMRSIERQRTLNEQIPAFFYKAISQLDQYLNESAAKEKDAKKKMKAPVAKAMNGMKQKLKKVIKENDETIARYRSDPEGFEAAAEAALSAAAAPADAETAIAKGKKERLAAALDSDANDDFQTVGRGGRTETFTSEGLFKSLTAIMEARGKKSTDKNEQIRKLHDLSGVADSPYKKIRVILALVAARFDYNASATAYMPVEMWDSARKEINEIVALLGKNRSYVVREETEDYDDEVERVPGQNGEKDVVAVRGSIISFVDRLDDEFTKSLQNIDPHTTEYVDRLCDEKKLYETIVLAQGYFESQSETEALSRCTMRRLDHVYAKQDVIIKALESTLGEAAKTFESKLFPSAVRVAEQDGPAVLVRALCTYLYQARGVQAERPRTRAVLCHIYFHALHADYHVARDMFLMSHLQDAIQLADVATQILYNRVVVQIGICAFRNGLIKESQVALQEIFATGRVKELLAQGVQKQNQFSTVTPEQEKLERQRQLPFHMHINLELLECIYLISSMLLEVPNMALAGNDPELRKRVISRPFRRMLDYTDRQVFSGPPENTRDHIMQACKALQNGDCKACIELISDIKIWKLMPGSQEVKLMLAKRIQEVGLRTYLFSYSAYYESVSLSHLAATFDVEETVVKAMVSKMIYNDELAASLDPSANVVSFHRLELTKVQQLAATLAEKANSMLEQNERLLDAKLGEGKEQRSGAGGERGDREGGQPGGRRERRGGSAARGRGRGRGRAQQFQALGQKV</sequence>
<comment type="function">
    <text evidence="1">Component of the eukaryotic translation initiation factor 3 (eIF-3) complex, which is involved in protein synthesis of a specialized repertoire of mRNAs and, together with other initiation factors, stimulates binding of mRNA and methionyl-tRNAi to the 40S ribosome. The eIF-3 complex specifically targets and initiates translation of a subset of mRNAs involved in cell proliferation.</text>
</comment>
<comment type="subunit">
    <text evidence="1">Component of the eukaryotic translation initiation factor 3 (eIF-3) complex.</text>
</comment>
<comment type="subcellular location">
    <subcellularLocation>
        <location evidence="1">Cytoplasm</location>
    </subcellularLocation>
</comment>
<comment type="similarity">
    <text evidence="1">Belongs to the eIF-3 subunit C family.</text>
</comment>
<name>EIF3C_MYCMD</name>
<protein>
    <recommendedName>
        <fullName evidence="1">Eukaryotic translation initiation factor 3 subunit C</fullName>
        <shortName evidence="1">eIF3c</shortName>
    </recommendedName>
    <alternativeName>
        <fullName evidence="1">Eukaryotic translation initiation factor 3 93 kDa subunit homolog</fullName>
        <shortName evidence="1">eIF3 p93</shortName>
    </alternativeName>
    <alternativeName>
        <fullName evidence="1">Translation initiation factor eIF3, p93 subunit homolog</fullName>
    </alternativeName>
</protein>
<organism>
    <name type="scientific">Mycosarcoma maydis</name>
    <name type="common">Corn smut fungus</name>
    <name type="synonym">Ustilago maydis</name>
    <dbReference type="NCBI Taxonomy" id="5270"/>
    <lineage>
        <taxon>Eukaryota</taxon>
        <taxon>Fungi</taxon>
        <taxon>Dikarya</taxon>
        <taxon>Basidiomycota</taxon>
        <taxon>Ustilaginomycotina</taxon>
        <taxon>Ustilaginomycetes</taxon>
        <taxon>Ustilaginales</taxon>
        <taxon>Ustilaginaceae</taxon>
        <taxon>Mycosarcoma</taxon>
    </lineage>
</organism>
<keyword id="KW-0963">Cytoplasm</keyword>
<keyword id="KW-0396">Initiation factor</keyword>
<keyword id="KW-0648">Protein biosynthesis</keyword>
<keyword id="KW-1185">Reference proteome</keyword>
<reference key="1">
    <citation type="journal article" date="2006" name="Nature">
        <title>Insights from the genome of the biotrophic fungal plant pathogen Ustilago maydis.</title>
        <authorList>
            <person name="Kaemper J."/>
            <person name="Kahmann R."/>
            <person name="Boelker M."/>
            <person name="Ma L.-J."/>
            <person name="Brefort T."/>
            <person name="Saville B.J."/>
            <person name="Banuett F."/>
            <person name="Kronstad J.W."/>
            <person name="Gold S.E."/>
            <person name="Mueller O."/>
            <person name="Perlin M.H."/>
            <person name="Woesten H.A.B."/>
            <person name="de Vries R."/>
            <person name="Ruiz-Herrera J."/>
            <person name="Reynaga-Pena C.G."/>
            <person name="Snetselaar K."/>
            <person name="McCann M."/>
            <person name="Perez-Martin J."/>
            <person name="Feldbruegge M."/>
            <person name="Basse C.W."/>
            <person name="Steinberg G."/>
            <person name="Ibeas J.I."/>
            <person name="Holloman W."/>
            <person name="Guzman P."/>
            <person name="Farman M.L."/>
            <person name="Stajich J.E."/>
            <person name="Sentandreu R."/>
            <person name="Gonzalez-Prieto J.M."/>
            <person name="Kennell J.C."/>
            <person name="Molina L."/>
            <person name="Schirawski J."/>
            <person name="Mendoza-Mendoza A."/>
            <person name="Greilinger D."/>
            <person name="Muench K."/>
            <person name="Roessel N."/>
            <person name="Scherer M."/>
            <person name="Vranes M."/>
            <person name="Ladendorf O."/>
            <person name="Vincon V."/>
            <person name="Fuchs U."/>
            <person name="Sandrock B."/>
            <person name="Meng S."/>
            <person name="Ho E.C.H."/>
            <person name="Cahill M.J."/>
            <person name="Boyce K.J."/>
            <person name="Klose J."/>
            <person name="Klosterman S.J."/>
            <person name="Deelstra H.J."/>
            <person name="Ortiz-Castellanos L."/>
            <person name="Li W."/>
            <person name="Sanchez-Alonso P."/>
            <person name="Schreier P.H."/>
            <person name="Haeuser-Hahn I."/>
            <person name="Vaupel M."/>
            <person name="Koopmann E."/>
            <person name="Friedrich G."/>
            <person name="Voss H."/>
            <person name="Schlueter T."/>
            <person name="Margolis J."/>
            <person name="Platt D."/>
            <person name="Swimmer C."/>
            <person name="Gnirke A."/>
            <person name="Chen F."/>
            <person name="Vysotskaia V."/>
            <person name="Mannhaupt G."/>
            <person name="Gueldener U."/>
            <person name="Muensterkoetter M."/>
            <person name="Haase D."/>
            <person name="Oesterheld M."/>
            <person name="Mewes H.-W."/>
            <person name="Mauceli E.W."/>
            <person name="DeCaprio D."/>
            <person name="Wade C.M."/>
            <person name="Butler J."/>
            <person name="Young S.K."/>
            <person name="Jaffe D.B."/>
            <person name="Calvo S.E."/>
            <person name="Nusbaum C."/>
            <person name="Galagan J.E."/>
            <person name="Birren B.W."/>
        </authorList>
    </citation>
    <scope>NUCLEOTIDE SEQUENCE [LARGE SCALE GENOMIC DNA]</scope>
    <source>
        <strain>DSM 14603 / FGSC 9021 / UM521</strain>
    </source>
</reference>
<reference key="2">
    <citation type="submission" date="2014-09" db="EMBL/GenBank/DDBJ databases">
        <authorList>
            <person name="Gueldener U."/>
            <person name="Muensterkoetter M."/>
            <person name="Walter M.C."/>
            <person name="Mannhaupt G."/>
            <person name="Kahmann R."/>
        </authorList>
    </citation>
    <scope>GENOME REANNOTATION</scope>
    <source>
        <strain>DSM 14603 / FGSC 9021 / UM521</strain>
    </source>
</reference>
<proteinExistence type="inferred from homology"/>
<feature type="chain" id="PRO_0000364289" description="Eukaryotic translation initiation factor 3 subunit C">
    <location>
        <begin position="1"/>
        <end position="895"/>
    </location>
</feature>
<feature type="domain" description="PCI" evidence="2">
    <location>
        <begin position="638"/>
        <end position="812"/>
    </location>
</feature>
<feature type="region of interest" description="Disordered" evidence="3">
    <location>
        <begin position="1"/>
        <end position="108"/>
    </location>
</feature>
<feature type="region of interest" description="Disordered" evidence="3">
    <location>
        <begin position="838"/>
        <end position="895"/>
    </location>
</feature>
<feature type="compositionally biased region" description="Acidic residues" evidence="3">
    <location>
        <begin position="11"/>
        <end position="31"/>
    </location>
</feature>
<feature type="compositionally biased region" description="Acidic residues" evidence="3">
    <location>
        <begin position="52"/>
        <end position="75"/>
    </location>
</feature>
<feature type="compositionally biased region" description="Basic and acidic residues" evidence="3">
    <location>
        <begin position="838"/>
        <end position="860"/>
    </location>
</feature>
<feature type="compositionally biased region" description="Low complexity" evidence="3">
    <location>
        <begin position="884"/>
        <end position="895"/>
    </location>
</feature>
<accession>Q4P0P0</accession>
<accession>A0A0D1CA69</accession>